<dbReference type="EC" id="2.7.7.2" evidence="1"/>
<dbReference type="EMBL" id="CP001696">
    <property type="protein sequence ID" value="ACV23989.1"/>
    <property type="molecule type" value="Genomic_DNA"/>
</dbReference>
<dbReference type="SMR" id="C7P607"/>
<dbReference type="STRING" id="573064.Mefer_0147"/>
<dbReference type="KEGG" id="mfe:Mefer_0147"/>
<dbReference type="eggNOG" id="arCOG01222">
    <property type="taxonomic scope" value="Archaea"/>
</dbReference>
<dbReference type="HOGENOM" id="CLU_034585_2_1_2"/>
<dbReference type="UniPathway" id="UPA00277">
    <property type="reaction ID" value="UER00407"/>
</dbReference>
<dbReference type="Proteomes" id="UP000001495">
    <property type="component" value="Chromosome"/>
</dbReference>
<dbReference type="GO" id="GO:0005524">
    <property type="term" value="F:ATP binding"/>
    <property type="evidence" value="ECO:0007669"/>
    <property type="project" value="UniProtKB-UniRule"/>
</dbReference>
<dbReference type="GO" id="GO:0003919">
    <property type="term" value="F:FMN adenylyltransferase activity"/>
    <property type="evidence" value="ECO:0007669"/>
    <property type="project" value="UniProtKB-UniRule"/>
</dbReference>
<dbReference type="GO" id="GO:0006747">
    <property type="term" value="P:FAD biosynthetic process"/>
    <property type="evidence" value="ECO:0007669"/>
    <property type="project" value="UniProtKB-UniRule"/>
</dbReference>
<dbReference type="GO" id="GO:0046444">
    <property type="term" value="P:FMN metabolic process"/>
    <property type="evidence" value="ECO:0007669"/>
    <property type="project" value="UniProtKB-UniRule"/>
</dbReference>
<dbReference type="CDD" id="cd02170">
    <property type="entry name" value="cytidylyltransferase"/>
    <property type="match status" value="1"/>
</dbReference>
<dbReference type="Gene3D" id="3.40.50.620">
    <property type="entry name" value="HUPs"/>
    <property type="match status" value="1"/>
</dbReference>
<dbReference type="HAMAP" id="MF_02115">
    <property type="entry name" value="FAD_synth_arch"/>
    <property type="match status" value="1"/>
</dbReference>
<dbReference type="InterPro" id="IPR050385">
    <property type="entry name" value="Archaeal_FAD_synthase"/>
</dbReference>
<dbReference type="InterPro" id="IPR004821">
    <property type="entry name" value="Cyt_trans-like"/>
</dbReference>
<dbReference type="InterPro" id="IPR024902">
    <property type="entry name" value="FAD_synth_RibL"/>
</dbReference>
<dbReference type="InterPro" id="IPR014729">
    <property type="entry name" value="Rossmann-like_a/b/a_fold"/>
</dbReference>
<dbReference type="NCBIfam" id="TIGR00125">
    <property type="entry name" value="cyt_tran_rel"/>
    <property type="match status" value="1"/>
</dbReference>
<dbReference type="PANTHER" id="PTHR43793">
    <property type="entry name" value="FAD SYNTHASE"/>
    <property type="match status" value="1"/>
</dbReference>
<dbReference type="PANTHER" id="PTHR43793:SF1">
    <property type="entry name" value="FAD SYNTHASE"/>
    <property type="match status" value="1"/>
</dbReference>
<dbReference type="Pfam" id="PF01467">
    <property type="entry name" value="CTP_transf_like"/>
    <property type="match status" value="1"/>
</dbReference>
<dbReference type="SUPFAM" id="SSF52374">
    <property type="entry name" value="Nucleotidylyl transferase"/>
    <property type="match status" value="1"/>
</dbReference>
<reference key="1">
    <citation type="submission" date="2009-08" db="EMBL/GenBank/DDBJ databases">
        <title>Complete sequence of chromosome of Methanocaldococcus fervens AG86.</title>
        <authorList>
            <consortium name="US DOE Joint Genome Institute"/>
            <person name="Lucas S."/>
            <person name="Copeland A."/>
            <person name="Lapidus A."/>
            <person name="Glavina del Rio T."/>
            <person name="Tice H."/>
            <person name="Bruce D."/>
            <person name="Goodwin L."/>
            <person name="Pitluck S."/>
            <person name="Chertkov O."/>
            <person name="Detter J.C."/>
            <person name="Han C."/>
            <person name="Tapia R."/>
            <person name="Larimer F."/>
            <person name="Land M."/>
            <person name="Hauser L."/>
            <person name="Kyrpides N."/>
            <person name="Ovchinnikova G."/>
            <person name="Lupa-Sieprawska M."/>
            <person name="Whitman W.B."/>
        </authorList>
    </citation>
    <scope>NUCLEOTIDE SEQUENCE [LARGE SCALE GENOMIC DNA]</scope>
    <source>
        <strain>DSM 4213 / JCM 15782 / AG86</strain>
    </source>
</reference>
<protein>
    <recommendedName>
        <fullName evidence="1">FAD synthase</fullName>
        <ecNumber evidence="1">2.7.7.2</ecNumber>
    </recommendedName>
    <alternativeName>
        <fullName evidence="1">FMN adenylyltransferase</fullName>
    </alternativeName>
    <alternativeName>
        <fullName evidence="1">Flavin adenine dinucleotide synthase</fullName>
    </alternativeName>
</protein>
<name>RIBL_METFA</name>
<sequence>MVKKRVVTAGTFDILHPGHYEVLKFAKSLGDELIVIVARDETVKKIKGRKPIIPEEQRREMVEALKPVDKAILGSLKNKLEPILELKPDVIVLGPDQTTFDEETLKEELAKYGLHPEIVRFKGYKKCPFHSSFDIVKEIIRRFCNKEIKI</sequence>
<accession>C7P607</accession>
<proteinExistence type="inferred from homology"/>
<keyword id="KW-0067">ATP-binding</keyword>
<keyword id="KW-0274">FAD</keyword>
<keyword id="KW-0285">Flavoprotein</keyword>
<keyword id="KW-0288">FMN</keyword>
<keyword id="KW-0547">Nucleotide-binding</keyword>
<keyword id="KW-0548">Nucleotidyltransferase</keyword>
<keyword id="KW-0808">Transferase</keyword>
<evidence type="ECO:0000255" key="1">
    <source>
        <dbReference type="HAMAP-Rule" id="MF_02115"/>
    </source>
</evidence>
<organism>
    <name type="scientific">Methanocaldococcus fervens (strain DSM 4213 / JCM 15782 / AG86)</name>
    <name type="common">Methanococcus fervens</name>
    <dbReference type="NCBI Taxonomy" id="573064"/>
    <lineage>
        <taxon>Archaea</taxon>
        <taxon>Methanobacteriati</taxon>
        <taxon>Methanobacteriota</taxon>
        <taxon>Methanomada group</taxon>
        <taxon>Methanococci</taxon>
        <taxon>Methanococcales</taxon>
        <taxon>Methanocaldococcaceae</taxon>
        <taxon>Methanocaldococcus</taxon>
    </lineage>
</organism>
<comment type="function">
    <text evidence="1">Catalyzes the transfer of the AMP portion of ATP to flavin mononucleotide (FMN) to produce flavin adenine dinucleotide (FAD) coenzyme.</text>
</comment>
<comment type="catalytic activity">
    <reaction evidence="1">
        <text>FMN + ATP + H(+) = FAD + diphosphate</text>
        <dbReference type="Rhea" id="RHEA:17237"/>
        <dbReference type="ChEBI" id="CHEBI:15378"/>
        <dbReference type="ChEBI" id="CHEBI:30616"/>
        <dbReference type="ChEBI" id="CHEBI:33019"/>
        <dbReference type="ChEBI" id="CHEBI:57692"/>
        <dbReference type="ChEBI" id="CHEBI:58210"/>
        <dbReference type="EC" id="2.7.7.2"/>
    </reaction>
</comment>
<comment type="cofactor">
    <cofactor evidence="1">
        <name>a divalent metal cation</name>
        <dbReference type="ChEBI" id="CHEBI:60240"/>
    </cofactor>
</comment>
<comment type="pathway">
    <text evidence="1">Cofactor biosynthesis; FAD biosynthesis; FAD from FMN: step 1/1.</text>
</comment>
<comment type="subunit">
    <text evidence="1">Homodimer.</text>
</comment>
<comment type="similarity">
    <text evidence="1">Belongs to the archaeal FAD synthase family.</text>
</comment>
<gene>
    <name evidence="1" type="primary">ribL</name>
    <name type="ordered locus">Mefer_0147</name>
</gene>
<feature type="chain" id="PRO_0000406247" description="FAD synthase">
    <location>
        <begin position="1"/>
        <end position="150"/>
    </location>
</feature>
<feature type="binding site" evidence="1">
    <location>
        <begin position="11"/>
        <end position="12"/>
    </location>
    <ligand>
        <name>ATP</name>
        <dbReference type="ChEBI" id="CHEBI:30616"/>
    </ligand>
</feature>
<feature type="binding site" evidence="1">
    <location>
        <begin position="16"/>
        <end position="19"/>
    </location>
    <ligand>
        <name>ATP</name>
        <dbReference type="ChEBI" id="CHEBI:30616"/>
    </ligand>
</feature>
<feature type="binding site" evidence="1">
    <location>
        <position position="96"/>
    </location>
    <ligand>
        <name>ATP</name>
        <dbReference type="ChEBI" id="CHEBI:30616"/>
    </ligand>
</feature>
<feature type="binding site" evidence="1">
    <location>
        <position position="124"/>
    </location>
    <ligand>
        <name>ATP</name>
        <dbReference type="ChEBI" id="CHEBI:30616"/>
    </ligand>
</feature>